<organism>
    <name type="scientific">Lycosa singoriensis</name>
    <name type="common">Wolf spider</name>
    <name type="synonym">Aranea singoriensis</name>
    <dbReference type="NCBI Taxonomy" id="434756"/>
    <lineage>
        <taxon>Eukaryota</taxon>
        <taxon>Metazoa</taxon>
        <taxon>Ecdysozoa</taxon>
        <taxon>Arthropoda</taxon>
        <taxon>Chelicerata</taxon>
        <taxon>Arachnida</taxon>
        <taxon>Araneae</taxon>
        <taxon>Araneomorphae</taxon>
        <taxon>Entelegynae</taxon>
        <taxon>Lycosoidea</taxon>
        <taxon>Lycosidae</taxon>
        <taxon>Lycosa</taxon>
    </lineage>
</organism>
<keyword id="KW-1015">Disulfide bond</keyword>
<keyword id="KW-0960">Knottin</keyword>
<keyword id="KW-0964">Secreted</keyword>
<keyword id="KW-0732">Signal</keyword>
<keyword id="KW-0800">Toxin</keyword>
<dbReference type="EMBL" id="EU926002">
    <property type="protein sequence ID" value="ACI41334.1"/>
    <property type="molecule type" value="mRNA"/>
</dbReference>
<dbReference type="EMBL" id="FM864006">
    <property type="protein sequence ID" value="CAS03604.1"/>
    <property type="molecule type" value="mRNA"/>
</dbReference>
<dbReference type="SMR" id="B6DCR8"/>
<dbReference type="ArachnoServer" id="AS000951">
    <property type="toxin name" value="U3-lycotoxin-Ls1i"/>
</dbReference>
<dbReference type="GO" id="GO:0005576">
    <property type="term" value="C:extracellular region"/>
    <property type="evidence" value="ECO:0007669"/>
    <property type="project" value="UniProtKB-SubCell"/>
</dbReference>
<dbReference type="GO" id="GO:0090729">
    <property type="term" value="F:toxin activity"/>
    <property type="evidence" value="ECO:0007669"/>
    <property type="project" value="UniProtKB-KW"/>
</dbReference>
<dbReference type="InterPro" id="IPR019553">
    <property type="entry name" value="Spider_toxin_CSTX_knottin"/>
</dbReference>
<dbReference type="InterPro" id="IPR011142">
    <property type="entry name" value="Spider_toxin_CSTX_Knottin_CS"/>
</dbReference>
<dbReference type="Pfam" id="PF10530">
    <property type="entry name" value="Toxin_35"/>
    <property type="match status" value="1"/>
</dbReference>
<dbReference type="PROSITE" id="PS60029">
    <property type="entry name" value="SPIDER_CSTX"/>
    <property type="match status" value="1"/>
</dbReference>
<reference key="1">
    <citation type="journal article" date="2010" name="Zoology">
        <title>Transcriptome analysis of the venom glands of the Chinese wolf spider Lycosa singoriensis.</title>
        <authorList>
            <person name="Zhang Y."/>
            <person name="Chen J."/>
            <person name="Tang X."/>
            <person name="Wang F."/>
            <person name="Jiang L."/>
            <person name="Xiong X."/>
            <person name="Wang M."/>
            <person name="Rong M."/>
            <person name="Liu Z."/>
            <person name="Liang S."/>
        </authorList>
    </citation>
    <scope>NUCLEOTIDE SEQUENCE [LARGE SCALE MRNA]</scope>
    <source>
        <tissue>Venom gland</tissue>
    </source>
</reference>
<comment type="subcellular location">
    <subcellularLocation>
        <location evidence="1">Secreted</location>
    </subcellularLocation>
</comment>
<comment type="tissue specificity">
    <text>Expressed by the venom gland.</text>
</comment>
<comment type="domain">
    <text evidence="1">The presence of a 'disulfide through disulfide knot' structurally defines this protein as a knottin.</text>
</comment>
<comment type="similarity">
    <text evidence="3">Belongs to the neurotoxin 19 (CSTX) family. 01 subfamily.</text>
</comment>
<protein>
    <recommendedName>
        <fullName>U3-lycotoxin-Ls1i</fullName>
    </recommendedName>
    <alternativeName>
        <fullName>Toxin-like structure LSTX-B23</fullName>
    </alternativeName>
</protein>
<sequence length="115" mass="13329">MKFVLLFGVFLVTLFSYSSAEMLDDFDQADEDELLSLIEKEEARAKECIPRFYDCSHDRHSCCRSELFKDVCTCFYPKGGDNEVCTCQQPKHLKYMEKAADKAKKFGGKIKKWFG</sequence>
<accession>B6DCR8</accession>
<proteinExistence type="evidence at transcript level"/>
<feature type="signal peptide" evidence="2">
    <location>
        <begin position="1"/>
        <end position="20"/>
    </location>
</feature>
<feature type="propeptide" id="PRO_0000401651" evidence="1">
    <location>
        <begin position="21"/>
        <end position="44"/>
    </location>
</feature>
<feature type="chain" id="PRO_0000401652" description="U3-lycotoxin-Ls1i">
    <location>
        <begin position="45"/>
        <end position="115"/>
    </location>
</feature>
<feature type="disulfide bond" evidence="1">
    <location>
        <begin position="48"/>
        <end position="63"/>
    </location>
</feature>
<feature type="disulfide bond" evidence="1">
    <location>
        <begin position="55"/>
        <end position="72"/>
    </location>
</feature>
<feature type="disulfide bond" evidence="1">
    <location>
        <begin position="62"/>
        <end position="87"/>
    </location>
</feature>
<feature type="disulfide bond" evidence="1">
    <location>
        <begin position="74"/>
        <end position="85"/>
    </location>
</feature>
<evidence type="ECO:0000250" key="1"/>
<evidence type="ECO:0000255" key="2"/>
<evidence type="ECO:0000305" key="3"/>
<name>TX323_LYCSI</name>